<organism>
    <name type="scientific">Bacillus cytotoxicus (strain DSM 22905 / CIP 110041 / 391-98 / NVH 391-98)</name>
    <dbReference type="NCBI Taxonomy" id="315749"/>
    <lineage>
        <taxon>Bacteria</taxon>
        <taxon>Bacillati</taxon>
        <taxon>Bacillota</taxon>
        <taxon>Bacilli</taxon>
        <taxon>Bacillales</taxon>
        <taxon>Bacillaceae</taxon>
        <taxon>Bacillus</taxon>
        <taxon>Bacillus cereus group</taxon>
    </lineage>
</organism>
<sequence>MGRKKEVTNAQRQRPEILAQTIKTGIIKSNLVPMFAGLTLALYKYKISPFEKIPEILFAFIGSILIIGAAGAFNNLYDRDIDSIMERTKNRPTVTGDISPKTALWLGIFMTIFGLVFLALTTYLAAILGFIGLFLYVVPYTMWSKRRTIYNTEIGSVSGAMPPLIGWAAIYPDVTHPAIIGLFIIMIIWQMPHFYAIAIRKHKEYEAANVPMLPVVKGVKRTYIQTNVYLVILIIISILLGSLSIGLMLVSLLLSILWLALSIYGYKKMDSEKWAKSLFIFSLFHMTILFSTVIIYSLVGIFFGS</sequence>
<gene>
    <name evidence="1" type="primary">ctaB1</name>
    <name type="ordered locus">Bcer98_1429</name>
</gene>
<keyword id="KW-1003">Cell membrane</keyword>
<keyword id="KW-0350">Heme biosynthesis</keyword>
<keyword id="KW-0472">Membrane</keyword>
<keyword id="KW-0808">Transferase</keyword>
<keyword id="KW-0812">Transmembrane</keyword>
<keyword id="KW-1133">Transmembrane helix</keyword>
<reference key="1">
    <citation type="journal article" date="2008" name="Chem. Biol. Interact.">
        <title>Extending the Bacillus cereus group genomics to putative food-borne pathogens of different toxicity.</title>
        <authorList>
            <person name="Lapidus A."/>
            <person name="Goltsman E."/>
            <person name="Auger S."/>
            <person name="Galleron N."/>
            <person name="Segurens B."/>
            <person name="Dossat C."/>
            <person name="Land M.L."/>
            <person name="Broussolle V."/>
            <person name="Brillard J."/>
            <person name="Guinebretiere M.-H."/>
            <person name="Sanchis V."/>
            <person name="Nguen-the C."/>
            <person name="Lereclus D."/>
            <person name="Richardson P."/>
            <person name="Wincker P."/>
            <person name="Weissenbach J."/>
            <person name="Ehrlich S.D."/>
            <person name="Sorokin A."/>
        </authorList>
    </citation>
    <scope>NUCLEOTIDE SEQUENCE [LARGE SCALE GENOMIC DNA]</scope>
    <source>
        <strain>DSM 22905 / CIP 110041 / 391-98 / NVH 391-98</strain>
    </source>
</reference>
<proteinExistence type="inferred from homology"/>
<name>COXX1_BACCN</name>
<evidence type="ECO:0000255" key="1">
    <source>
        <dbReference type="HAMAP-Rule" id="MF_00154"/>
    </source>
</evidence>
<accession>A7GNP0</accession>
<dbReference type="EC" id="2.5.1.141" evidence="1"/>
<dbReference type="EMBL" id="CP000764">
    <property type="protein sequence ID" value="ABS21748.1"/>
    <property type="molecule type" value="Genomic_DNA"/>
</dbReference>
<dbReference type="SMR" id="A7GNP0"/>
<dbReference type="STRING" id="315749.Bcer98_1429"/>
<dbReference type="GeneID" id="33896769"/>
<dbReference type="KEGG" id="bcy:Bcer98_1429"/>
<dbReference type="eggNOG" id="COG0109">
    <property type="taxonomic scope" value="Bacteria"/>
</dbReference>
<dbReference type="HOGENOM" id="CLU_029631_0_0_9"/>
<dbReference type="OrthoDB" id="9814417at2"/>
<dbReference type="UniPathway" id="UPA00834">
    <property type="reaction ID" value="UER00712"/>
</dbReference>
<dbReference type="Proteomes" id="UP000002300">
    <property type="component" value="Chromosome"/>
</dbReference>
<dbReference type="GO" id="GO:0005886">
    <property type="term" value="C:plasma membrane"/>
    <property type="evidence" value="ECO:0007669"/>
    <property type="project" value="UniProtKB-SubCell"/>
</dbReference>
<dbReference type="GO" id="GO:0008495">
    <property type="term" value="F:protoheme IX farnesyltransferase activity"/>
    <property type="evidence" value="ECO:0007669"/>
    <property type="project" value="UniProtKB-UniRule"/>
</dbReference>
<dbReference type="GO" id="GO:0048034">
    <property type="term" value="P:heme O biosynthetic process"/>
    <property type="evidence" value="ECO:0007669"/>
    <property type="project" value="UniProtKB-UniRule"/>
</dbReference>
<dbReference type="CDD" id="cd13957">
    <property type="entry name" value="PT_UbiA_Cox10"/>
    <property type="match status" value="1"/>
</dbReference>
<dbReference type="FunFam" id="1.10.357.140:FF:000001">
    <property type="entry name" value="Protoheme IX farnesyltransferase"/>
    <property type="match status" value="1"/>
</dbReference>
<dbReference type="Gene3D" id="1.10.357.140">
    <property type="entry name" value="UbiA prenyltransferase"/>
    <property type="match status" value="1"/>
</dbReference>
<dbReference type="HAMAP" id="MF_00154">
    <property type="entry name" value="CyoE_CtaB"/>
    <property type="match status" value="1"/>
</dbReference>
<dbReference type="InterPro" id="IPR006369">
    <property type="entry name" value="Protohaem_IX_farnesylTrfase"/>
</dbReference>
<dbReference type="InterPro" id="IPR000537">
    <property type="entry name" value="UbiA_prenyltransferase"/>
</dbReference>
<dbReference type="InterPro" id="IPR030470">
    <property type="entry name" value="UbiA_prenylTrfase_CS"/>
</dbReference>
<dbReference type="InterPro" id="IPR044878">
    <property type="entry name" value="UbiA_sf"/>
</dbReference>
<dbReference type="NCBIfam" id="TIGR01473">
    <property type="entry name" value="cyoE_ctaB"/>
    <property type="match status" value="1"/>
</dbReference>
<dbReference type="PANTHER" id="PTHR43448">
    <property type="entry name" value="PROTOHEME IX FARNESYLTRANSFERASE, MITOCHONDRIAL"/>
    <property type="match status" value="1"/>
</dbReference>
<dbReference type="PANTHER" id="PTHR43448:SF2">
    <property type="entry name" value="PROTOHEME IX FARNESYLTRANSFERASE, MITOCHONDRIAL"/>
    <property type="match status" value="1"/>
</dbReference>
<dbReference type="Pfam" id="PF01040">
    <property type="entry name" value="UbiA"/>
    <property type="match status" value="1"/>
</dbReference>
<dbReference type="PROSITE" id="PS00943">
    <property type="entry name" value="UBIA"/>
    <property type="match status" value="1"/>
</dbReference>
<comment type="function">
    <text evidence="1">Converts heme B (protoheme IX) to heme O by substitution of the vinyl group on carbon 2 of heme B porphyrin ring with a hydroxyethyl farnesyl side group.</text>
</comment>
<comment type="catalytic activity">
    <reaction evidence="1">
        <text>heme b + (2E,6E)-farnesyl diphosphate + H2O = Fe(II)-heme o + diphosphate</text>
        <dbReference type="Rhea" id="RHEA:28070"/>
        <dbReference type="ChEBI" id="CHEBI:15377"/>
        <dbReference type="ChEBI" id="CHEBI:33019"/>
        <dbReference type="ChEBI" id="CHEBI:60344"/>
        <dbReference type="ChEBI" id="CHEBI:60530"/>
        <dbReference type="ChEBI" id="CHEBI:175763"/>
        <dbReference type="EC" id="2.5.1.141"/>
    </reaction>
</comment>
<comment type="pathway">
    <text evidence="1">Porphyrin-containing compound metabolism; heme O biosynthesis; heme O from protoheme: step 1/1.</text>
</comment>
<comment type="subunit">
    <text evidence="1">Interacts with CtaA.</text>
</comment>
<comment type="subcellular location">
    <subcellularLocation>
        <location evidence="1">Cell membrane</location>
        <topology evidence="1">Multi-pass membrane protein</topology>
    </subcellularLocation>
</comment>
<comment type="miscellaneous">
    <text evidence="1">Carbon 2 of the heme B porphyrin ring is defined according to the Fischer nomenclature.</text>
</comment>
<comment type="similarity">
    <text evidence="1">Belongs to the UbiA prenyltransferase family. Protoheme IX farnesyltransferase subfamily.</text>
</comment>
<protein>
    <recommendedName>
        <fullName evidence="1">Protoheme IX farnesyltransferase 1</fullName>
        <ecNumber evidence="1">2.5.1.141</ecNumber>
    </recommendedName>
    <alternativeName>
        <fullName evidence="1">Heme B farnesyltransferase 1</fullName>
    </alternativeName>
    <alternativeName>
        <fullName evidence="1">Heme O synthase 1</fullName>
    </alternativeName>
</protein>
<feature type="chain" id="PRO_0000346024" description="Protoheme IX farnesyltransferase 1">
    <location>
        <begin position="1"/>
        <end position="305"/>
    </location>
</feature>
<feature type="transmembrane region" description="Helical" evidence="1">
    <location>
        <begin position="22"/>
        <end position="42"/>
    </location>
</feature>
<feature type="transmembrane region" description="Helical" evidence="1">
    <location>
        <begin position="53"/>
        <end position="73"/>
    </location>
</feature>
<feature type="transmembrane region" description="Helical" evidence="1">
    <location>
        <begin position="94"/>
        <end position="114"/>
    </location>
</feature>
<feature type="transmembrane region" description="Helical" evidence="1">
    <location>
        <begin position="115"/>
        <end position="135"/>
    </location>
</feature>
<feature type="transmembrane region" description="Helical" evidence="1">
    <location>
        <begin position="154"/>
        <end position="174"/>
    </location>
</feature>
<feature type="transmembrane region" description="Helical" evidence="1">
    <location>
        <begin position="179"/>
        <end position="199"/>
    </location>
</feature>
<feature type="transmembrane region" description="Helical" evidence="1">
    <location>
        <begin position="230"/>
        <end position="250"/>
    </location>
</feature>
<feature type="transmembrane region" description="Helical" evidence="1">
    <location>
        <begin position="283"/>
        <end position="303"/>
    </location>
</feature>